<reference key="1">
    <citation type="journal article" date="2009" name="BMC Microbiol.">
        <title>The genome sequence of Geobacter metallireducens: features of metabolism, physiology and regulation common and dissimilar to Geobacter sulfurreducens.</title>
        <authorList>
            <person name="Aklujkar M."/>
            <person name="Krushkal J."/>
            <person name="DiBartolo G."/>
            <person name="Lapidus A."/>
            <person name="Land M.L."/>
            <person name="Lovley D.R."/>
        </authorList>
    </citation>
    <scope>NUCLEOTIDE SEQUENCE [LARGE SCALE GENOMIC DNA]</scope>
    <source>
        <strain>ATCC 53774 / DSM 7210 / GS-15</strain>
    </source>
</reference>
<keyword id="KW-0004">4Fe-4S</keyword>
<keyword id="KW-0963">Cytoplasm</keyword>
<keyword id="KW-0408">Iron</keyword>
<keyword id="KW-0411">Iron-sulfur</keyword>
<keyword id="KW-0479">Metal-binding</keyword>
<keyword id="KW-0662">Pyridine nucleotide biosynthesis</keyword>
<keyword id="KW-1185">Reference proteome</keyword>
<keyword id="KW-0808">Transferase</keyword>
<dbReference type="EC" id="2.5.1.72" evidence="1"/>
<dbReference type="EMBL" id="CP000148">
    <property type="protein sequence ID" value="ABB33749.1"/>
    <property type="molecule type" value="Genomic_DNA"/>
</dbReference>
<dbReference type="RefSeq" id="WP_004513700.1">
    <property type="nucleotide sequence ID" value="NC_007517.1"/>
</dbReference>
<dbReference type="SMR" id="Q39PS5"/>
<dbReference type="STRING" id="269799.Gmet_3544"/>
<dbReference type="KEGG" id="gme:Gmet_3544"/>
<dbReference type="eggNOG" id="COG0379">
    <property type="taxonomic scope" value="Bacteria"/>
</dbReference>
<dbReference type="HOGENOM" id="CLU_047382_0_0_7"/>
<dbReference type="UniPathway" id="UPA00253">
    <property type="reaction ID" value="UER00327"/>
</dbReference>
<dbReference type="Proteomes" id="UP000007073">
    <property type="component" value="Chromosome"/>
</dbReference>
<dbReference type="GO" id="GO:0005829">
    <property type="term" value="C:cytosol"/>
    <property type="evidence" value="ECO:0007669"/>
    <property type="project" value="TreeGrafter"/>
</dbReference>
<dbReference type="GO" id="GO:0051539">
    <property type="term" value="F:4 iron, 4 sulfur cluster binding"/>
    <property type="evidence" value="ECO:0007669"/>
    <property type="project" value="UniProtKB-KW"/>
</dbReference>
<dbReference type="GO" id="GO:0046872">
    <property type="term" value="F:metal ion binding"/>
    <property type="evidence" value="ECO:0007669"/>
    <property type="project" value="UniProtKB-KW"/>
</dbReference>
<dbReference type="GO" id="GO:0008987">
    <property type="term" value="F:quinolinate synthetase A activity"/>
    <property type="evidence" value="ECO:0007669"/>
    <property type="project" value="UniProtKB-UniRule"/>
</dbReference>
<dbReference type="GO" id="GO:0034628">
    <property type="term" value="P:'de novo' NAD biosynthetic process from L-aspartate"/>
    <property type="evidence" value="ECO:0007669"/>
    <property type="project" value="TreeGrafter"/>
</dbReference>
<dbReference type="FunFam" id="3.40.50.10800:FF:000003">
    <property type="entry name" value="Quinolinate synthase A"/>
    <property type="match status" value="1"/>
</dbReference>
<dbReference type="Gene3D" id="3.40.50.10800">
    <property type="entry name" value="NadA-like"/>
    <property type="match status" value="3"/>
</dbReference>
<dbReference type="HAMAP" id="MF_00568">
    <property type="entry name" value="NadA_type2"/>
    <property type="match status" value="1"/>
</dbReference>
<dbReference type="InterPro" id="IPR003473">
    <property type="entry name" value="NadA"/>
</dbReference>
<dbReference type="InterPro" id="IPR036094">
    <property type="entry name" value="NadA_sf"/>
</dbReference>
<dbReference type="InterPro" id="IPR023066">
    <property type="entry name" value="Quinolinate_synth_type2"/>
</dbReference>
<dbReference type="NCBIfam" id="TIGR00550">
    <property type="entry name" value="nadA"/>
    <property type="match status" value="1"/>
</dbReference>
<dbReference type="NCBIfam" id="NF006878">
    <property type="entry name" value="PRK09375.1-2"/>
    <property type="match status" value="1"/>
</dbReference>
<dbReference type="NCBIfam" id="NF006879">
    <property type="entry name" value="PRK09375.1-4"/>
    <property type="match status" value="1"/>
</dbReference>
<dbReference type="PANTHER" id="PTHR30573:SF0">
    <property type="entry name" value="QUINOLINATE SYNTHASE, CHLOROPLASTIC"/>
    <property type="match status" value="1"/>
</dbReference>
<dbReference type="PANTHER" id="PTHR30573">
    <property type="entry name" value="QUINOLINATE SYNTHETASE A"/>
    <property type="match status" value="1"/>
</dbReference>
<dbReference type="Pfam" id="PF02445">
    <property type="entry name" value="NadA"/>
    <property type="match status" value="1"/>
</dbReference>
<dbReference type="SUPFAM" id="SSF142754">
    <property type="entry name" value="NadA-like"/>
    <property type="match status" value="1"/>
</dbReference>
<organism>
    <name type="scientific">Geobacter metallireducens (strain ATCC 53774 / DSM 7210 / GS-15)</name>
    <dbReference type="NCBI Taxonomy" id="269799"/>
    <lineage>
        <taxon>Bacteria</taxon>
        <taxon>Pseudomonadati</taxon>
        <taxon>Thermodesulfobacteriota</taxon>
        <taxon>Desulfuromonadia</taxon>
        <taxon>Geobacterales</taxon>
        <taxon>Geobacteraceae</taxon>
        <taxon>Geobacter</taxon>
    </lineage>
</organism>
<evidence type="ECO:0000255" key="1">
    <source>
        <dbReference type="HAMAP-Rule" id="MF_00568"/>
    </source>
</evidence>
<accession>Q39PS5</accession>
<protein>
    <recommendedName>
        <fullName evidence="1">Quinolinate synthase</fullName>
        <ecNumber evidence="1">2.5.1.72</ecNumber>
    </recommendedName>
</protein>
<sequence length="304" mass="33381">MQADTIKQEIRRLLKERNAVLLAHNYMRDEVQEIADITGDSLGLSQEAAKTAADVIVFCGVHFMAESASILSPHKTVLLPRRDAGCPMADMVTVEGLLELKARHPGVPVVTYVNSSAAVKAVSDICCTSANAVKVVNSLPDREVIFVPDRNLGQFVAKQSDKAFHFWDGYCPTHERLKADVVARLKAENPDALFICHPECNPAVVALADHACSTSGMYDYCRKSPAKRFIIGTEAGILYKLRLENPDKEFILASPALVCPNMKLTSLEDILDALTTMAPVVQVPEDIRVQAKRALDRMIAIPRD</sequence>
<name>NADA_GEOMG</name>
<gene>
    <name evidence="1" type="primary">nadA</name>
    <name type="ordered locus">Gmet_3544</name>
</gene>
<comment type="function">
    <text evidence="1">Catalyzes the condensation of iminoaspartate with dihydroxyacetone phosphate to form quinolinate.</text>
</comment>
<comment type="catalytic activity">
    <reaction evidence="1">
        <text>iminosuccinate + dihydroxyacetone phosphate = quinolinate + phosphate + 2 H2O + H(+)</text>
        <dbReference type="Rhea" id="RHEA:25888"/>
        <dbReference type="ChEBI" id="CHEBI:15377"/>
        <dbReference type="ChEBI" id="CHEBI:15378"/>
        <dbReference type="ChEBI" id="CHEBI:29959"/>
        <dbReference type="ChEBI" id="CHEBI:43474"/>
        <dbReference type="ChEBI" id="CHEBI:57642"/>
        <dbReference type="ChEBI" id="CHEBI:77875"/>
        <dbReference type="EC" id="2.5.1.72"/>
    </reaction>
    <physiologicalReaction direction="left-to-right" evidence="1">
        <dbReference type="Rhea" id="RHEA:25889"/>
    </physiologicalReaction>
</comment>
<comment type="cofactor">
    <cofactor evidence="1">
        <name>[4Fe-4S] cluster</name>
        <dbReference type="ChEBI" id="CHEBI:49883"/>
    </cofactor>
    <text evidence="1">Binds 1 [4Fe-4S] cluster per subunit.</text>
</comment>
<comment type="pathway">
    <text evidence="1">Cofactor biosynthesis; NAD(+) biosynthesis; quinolinate from iminoaspartate: step 1/1.</text>
</comment>
<comment type="subcellular location">
    <subcellularLocation>
        <location evidence="1">Cytoplasm</location>
    </subcellularLocation>
</comment>
<comment type="similarity">
    <text evidence="1">Belongs to the quinolinate synthase family. Type 2 subfamily.</text>
</comment>
<feature type="chain" id="PRO_1000061155" description="Quinolinate synthase">
    <location>
        <begin position="1"/>
        <end position="304"/>
    </location>
</feature>
<feature type="binding site" evidence="1">
    <location>
        <position position="24"/>
    </location>
    <ligand>
        <name>iminosuccinate</name>
        <dbReference type="ChEBI" id="CHEBI:77875"/>
    </ligand>
</feature>
<feature type="binding site" evidence="1">
    <location>
        <position position="41"/>
    </location>
    <ligand>
        <name>iminosuccinate</name>
        <dbReference type="ChEBI" id="CHEBI:77875"/>
    </ligand>
</feature>
<feature type="binding site" evidence="1">
    <location>
        <position position="86"/>
    </location>
    <ligand>
        <name>[4Fe-4S] cluster</name>
        <dbReference type="ChEBI" id="CHEBI:49883"/>
    </ligand>
</feature>
<feature type="binding site" evidence="1">
    <location>
        <begin position="112"/>
        <end position="114"/>
    </location>
    <ligand>
        <name>iminosuccinate</name>
        <dbReference type="ChEBI" id="CHEBI:77875"/>
    </ligand>
</feature>
<feature type="binding site" evidence="1">
    <location>
        <position position="129"/>
    </location>
    <ligand>
        <name>iminosuccinate</name>
        <dbReference type="ChEBI" id="CHEBI:77875"/>
    </ligand>
</feature>
<feature type="binding site" evidence="1">
    <location>
        <position position="171"/>
    </location>
    <ligand>
        <name>[4Fe-4S] cluster</name>
        <dbReference type="ChEBI" id="CHEBI:49883"/>
    </ligand>
</feature>
<feature type="binding site" evidence="1">
    <location>
        <begin position="197"/>
        <end position="199"/>
    </location>
    <ligand>
        <name>iminosuccinate</name>
        <dbReference type="ChEBI" id="CHEBI:77875"/>
    </ligand>
</feature>
<feature type="binding site" evidence="1">
    <location>
        <position position="214"/>
    </location>
    <ligand>
        <name>iminosuccinate</name>
        <dbReference type="ChEBI" id="CHEBI:77875"/>
    </ligand>
</feature>
<feature type="binding site" evidence="1">
    <location>
        <position position="259"/>
    </location>
    <ligand>
        <name>[4Fe-4S] cluster</name>
        <dbReference type="ChEBI" id="CHEBI:49883"/>
    </ligand>
</feature>
<proteinExistence type="inferred from homology"/>